<feature type="chain" id="PRO_1000082715" description="Elongation factor P-like protein">
    <location>
        <begin position="1"/>
        <end position="190"/>
    </location>
</feature>
<accession>A9MK40</accession>
<evidence type="ECO:0000255" key="1">
    <source>
        <dbReference type="HAMAP-Rule" id="MF_00646"/>
    </source>
</evidence>
<organism>
    <name type="scientific">Salmonella arizonae (strain ATCC BAA-731 / CDC346-86 / RSK2980)</name>
    <dbReference type="NCBI Taxonomy" id="41514"/>
    <lineage>
        <taxon>Bacteria</taxon>
        <taxon>Pseudomonadati</taxon>
        <taxon>Pseudomonadota</taxon>
        <taxon>Gammaproteobacteria</taxon>
        <taxon>Enterobacterales</taxon>
        <taxon>Enterobacteriaceae</taxon>
        <taxon>Salmonella</taxon>
    </lineage>
</organism>
<dbReference type="EMBL" id="CP000880">
    <property type="protein sequence ID" value="ABX20599.1"/>
    <property type="molecule type" value="Genomic_DNA"/>
</dbReference>
<dbReference type="SMR" id="A9MK40"/>
<dbReference type="STRING" id="41514.SARI_00676"/>
<dbReference type="KEGG" id="ses:SARI_00676"/>
<dbReference type="HOGENOM" id="CLU_074944_2_0_6"/>
<dbReference type="Proteomes" id="UP000002084">
    <property type="component" value="Chromosome"/>
</dbReference>
<dbReference type="GO" id="GO:0005829">
    <property type="term" value="C:cytosol"/>
    <property type="evidence" value="ECO:0007669"/>
    <property type="project" value="UniProtKB-ARBA"/>
</dbReference>
<dbReference type="GO" id="GO:0003746">
    <property type="term" value="F:translation elongation factor activity"/>
    <property type="evidence" value="ECO:0007669"/>
    <property type="project" value="UniProtKB-UniRule"/>
</dbReference>
<dbReference type="GO" id="GO:0043043">
    <property type="term" value="P:peptide biosynthetic process"/>
    <property type="evidence" value="ECO:0007669"/>
    <property type="project" value="InterPro"/>
</dbReference>
<dbReference type="CDD" id="cd04470">
    <property type="entry name" value="S1_EF-P_repeat_1"/>
    <property type="match status" value="1"/>
</dbReference>
<dbReference type="CDD" id="cd05794">
    <property type="entry name" value="S1_EF-P_repeat_2"/>
    <property type="match status" value="1"/>
</dbReference>
<dbReference type="FunFam" id="2.40.50.140:FF:000004">
    <property type="entry name" value="Elongation factor P"/>
    <property type="match status" value="1"/>
</dbReference>
<dbReference type="FunFam" id="2.30.30.30:FF:000011">
    <property type="entry name" value="Elongation factor P-like protein"/>
    <property type="match status" value="1"/>
</dbReference>
<dbReference type="FunFam" id="2.40.50.140:FF:000053">
    <property type="entry name" value="Elongation factor P-like protein"/>
    <property type="match status" value="1"/>
</dbReference>
<dbReference type="Gene3D" id="2.30.30.30">
    <property type="match status" value="1"/>
</dbReference>
<dbReference type="Gene3D" id="2.40.50.140">
    <property type="entry name" value="Nucleic acid-binding proteins"/>
    <property type="match status" value="2"/>
</dbReference>
<dbReference type="HAMAP" id="MF_00646">
    <property type="entry name" value="EFP"/>
    <property type="match status" value="1"/>
</dbReference>
<dbReference type="InterPro" id="IPR015365">
    <property type="entry name" value="Elong-fact-P_C"/>
</dbReference>
<dbReference type="InterPro" id="IPR012340">
    <property type="entry name" value="NA-bd_OB-fold"/>
</dbReference>
<dbReference type="InterPro" id="IPR014722">
    <property type="entry name" value="Rib_uL2_dom2"/>
</dbReference>
<dbReference type="InterPro" id="IPR020599">
    <property type="entry name" value="Transl_elong_fac_P/YeiP"/>
</dbReference>
<dbReference type="InterPro" id="IPR013185">
    <property type="entry name" value="Transl_elong_KOW-like"/>
</dbReference>
<dbReference type="InterPro" id="IPR011897">
    <property type="entry name" value="Transl_elong_p-like_YeiP"/>
</dbReference>
<dbReference type="InterPro" id="IPR001059">
    <property type="entry name" value="Transl_elong_P/YeiP_cen"/>
</dbReference>
<dbReference type="InterPro" id="IPR013852">
    <property type="entry name" value="Transl_elong_P/YeiP_CS"/>
</dbReference>
<dbReference type="InterPro" id="IPR008991">
    <property type="entry name" value="Translation_prot_SH3-like_sf"/>
</dbReference>
<dbReference type="NCBIfam" id="NF001810">
    <property type="entry name" value="PRK00529.1"/>
    <property type="match status" value="1"/>
</dbReference>
<dbReference type="NCBIfam" id="NF003392">
    <property type="entry name" value="PRK04542.1"/>
    <property type="match status" value="1"/>
</dbReference>
<dbReference type="NCBIfam" id="TIGR02178">
    <property type="entry name" value="yeiP"/>
    <property type="match status" value="1"/>
</dbReference>
<dbReference type="PANTHER" id="PTHR30053">
    <property type="entry name" value="ELONGATION FACTOR P"/>
    <property type="match status" value="1"/>
</dbReference>
<dbReference type="PANTHER" id="PTHR30053:SF14">
    <property type="entry name" value="TRANSLATION ELONGATION FACTOR KOW-LIKE DOMAIN-CONTAINING PROTEIN"/>
    <property type="match status" value="1"/>
</dbReference>
<dbReference type="Pfam" id="PF01132">
    <property type="entry name" value="EFP"/>
    <property type="match status" value="1"/>
</dbReference>
<dbReference type="Pfam" id="PF08207">
    <property type="entry name" value="EFP_N"/>
    <property type="match status" value="1"/>
</dbReference>
<dbReference type="Pfam" id="PF09285">
    <property type="entry name" value="Elong-fact-P_C"/>
    <property type="match status" value="1"/>
</dbReference>
<dbReference type="PIRSF" id="PIRSF005901">
    <property type="entry name" value="EF-P"/>
    <property type="match status" value="1"/>
</dbReference>
<dbReference type="SMART" id="SM01185">
    <property type="entry name" value="EFP"/>
    <property type="match status" value="1"/>
</dbReference>
<dbReference type="SMART" id="SM00841">
    <property type="entry name" value="Elong-fact-P_C"/>
    <property type="match status" value="1"/>
</dbReference>
<dbReference type="SUPFAM" id="SSF50249">
    <property type="entry name" value="Nucleic acid-binding proteins"/>
    <property type="match status" value="2"/>
</dbReference>
<dbReference type="SUPFAM" id="SSF50104">
    <property type="entry name" value="Translation proteins SH3-like domain"/>
    <property type="match status" value="1"/>
</dbReference>
<dbReference type="PROSITE" id="PS01275">
    <property type="entry name" value="EFP"/>
    <property type="match status" value="1"/>
</dbReference>
<gene>
    <name evidence="1" type="primary">yeiP</name>
    <name type="ordered locus">SARI_00676</name>
</gene>
<sequence length="190" mass="21386">MPRANEIKKGMVLNYNGKLLIVKDIDIQSPTARGAATLYKMRFSDVRTGLKVEERFKGDDIVDTVTLSRRGVDFSYVDGNEYVFMDKEDYTPYTFTKDQIEEELLFMPEGGMPDMQVLTWDGQLLALELPQTVDLEIVETAPGIKGASASARNKPATLSTGLVIQVPEYLSAGEKIRIHIEERRYMGRAD</sequence>
<comment type="similarity">
    <text evidence="1">Belongs to the elongation factor P family.</text>
</comment>
<name>EFPL_SALAR</name>
<protein>
    <recommendedName>
        <fullName evidence="1">Elongation factor P-like protein</fullName>
    </recommendedName>
</protein>
<reference key="1">
    <citation type="submission" date="2007-11" db="EMBL/GenBank/DDBJ databases">
        <authorList>
            <consortium name="The Salmonella enterica serovar Arizonae Genome Sequencing Project"/>
            <person name="McClelland M."/>
            <person name="Sanderson E.K."/>
            <person name="Porwollik S."/>
            <person name="Spieth J."/>
            <person name="Clifton W.S."/>
            <person name="Fulton R."/>
            <person name="Chunyan W."/>
            <person name="Wollam A."/>
            <person name="Shah N."/>
            <person name="Pepin K."/>
            <person name="Bhonagiri V."/>
            <person name="Nash W."/>
            <person name="Johnson M."/>
            <person name="Thiruvilangam P."/>
            <person name="Wilson R."/>
        </authorList>
    </citation>
    <scope>NUCLEOTIDE SEQUENCE [LARGE SCALE GENOMIC DNA]</scope>
    <source>
        <strain>ATCC BAA-731 / CDC346-86 / RSK2980</strain>
    </source>
</reference>
<keyword id="KW-1185">Reference proteome</keyword>
<proteinExistence type="inferred from homology"/>